<reference key="1">
    <citation type="journal article" date="2009" name="PLoS Genet.">
        <title>Organised genome dynamics in the Escherichia coli species results in highly diverse adaptive paths.</title>
        <authorList>
            <person name="Touchon M."/>
            <person name="Hoede C."/>
            <person name="Tenaillon O."/>
            <person name="Barbe V."/>
            <person name="Baeriswyl S."/>
            <person name="Bidet P."/>
            <person name="Bingen E."/>
            <person name="Bonacorsi S."/>
            <person name="Bouchier C."/>
            <person name="Bouvet O."/>
            <person name="Calteau A."/>
            <person name="Chiapello H."/>
            <person name="Clermont O."/>
            <person name="Cruveiller S."/>
            <person name="Danchin A."/>
            <person name="Diard M."/>
            <person name="Dossat C."/>
            <person name="Karoui M.E."/>
            <person name="Frapy E."/>
            <person name="Garry L."/>
            <person name="Ghigo J.M."/>
            <person name="Gilles A.M."/>
            <person name="Johnson J."/>
            <person name="Le Bouguenec C."/>
            <person name="Lescat M."/>
            <person name="Mangenot S."/>
            <person name="Martinez-Jehanne V."/>
            <person name="Matic I."/>
            <person name="Nassif X."/>
            <person name="Oztas S."/>
            <person name="Petit M.A."/>
            <person name="Pichon C."/>
            <person name="Rouy Z."/>
            <person name="Ruf C.S."/>
            <person name="Schneider D."/>
            <person name="Tourret J."/>
            <person name="Vacherie B."/>
            <person name="Vallenet D."/>
            <person name="Medigue C."/>
            <person name="Rocha E.P.C."/>
            <person name="Denamur E."/>
        </authorList>
    </citation>
    <scope>NUCLEOTIDE SEQUENCE [LARGE SCALE GENOMIC DNA]</scope>
    <source>
        <strain>UMN026 / ExPEC</strain>
    </source>
</reference>
<organism>
    <name type="scientific">Escherichia coli O17:K52:H18 (strain UMN026 / ExPEC)</name>
    <dbReference type="NCBI Taxonomy" id="585056"/>
    <lineage>
        <taxon>Bacteria</taxon>
        <taxon>Pseudomonadati</taxon>
        <taxon>Pseudomonadota</taxon>
        <taxon>Gammaproteobacteria</taxon>
        <taxon>Enterobacterales</taxon>
        <taxon>Enterobacteriaceae</taxon>
        <taxon>Escherichia</taxon>
    </lineage>
</organism>
<sequence length="180" mass="21226">MIIYLHGFDSNSPGNHEKVLQLQFIDPDVRLISYSTRHPKHDMQHLLKEVDKMLQLNVDERPLICGVGLGGYWAERIGFLCDIRQVIFNPNLFPYENMEGKIDRPEEYADIATKCVTNFREKNRDRCLVILSRNDEALNSQRTSEELHHYYEIVWDEEQTHKFKNISPHLQRIKAFKTLG</sequence>
<comment type="similarity">
    <text evidence="1">Belongs to the UPF0227 family.</text>
</comment>
<dbReference type="EMBL" id="CU928163">
    <property type="protein sequence ID" value="CAR12495.1"/>
    <property type="molecule type" value="Genomic_DNA"/>
</dbReference>
<dbReference type="RefSeq" id="WP_000587933.1">
    <property type="nucleotide sequence ID" value="NC_011751.1"/>
</dbReference>
<dbReference type="RefSeq" id="YP_002412038.1">
    <property type="nucleotide sequence ID" value="NC_011751.1"/>
</dbReference>
<dbReference type="SMR" id="B7NAY6"/>
<dbReference type="STRING" id="585056.ECUMN_1286"/>
<dbReference type="ESTHER" id="ecoli-ycfp">
    <property type="family name" value="abh_upf00227"/>
</dbReference>
<dbReference type="GeneID" id="93776300"/>
<dbReference type="KEGG" id="eum:ECUMN_1286"/>
<dbReference type="PATRIC" id="fig|585056.7.peg.1490"/>
<dbReference type="HOGENOM" id="CLU_128769_0_0_6"/>
<dbReference type="Proteomes" id="UP000007097">
    <property type="component" value="Chromosome"/>
</dbReference>
<dbReference type="FunFam" id="3.40.50.1820:FF:000007">
    <property type="entry name" value="UPF0227 protein YcfP"/>
    <property type="match status" value="1"/>
</dbReference>
<dbReference type="Gene3D" id="3.40.50.1820">
    <property type="entry name" value="alpha/beta hydrolase"/>
    <property type="match status" value="1"/>
</dbReference>
<dbReference type="HAMAP" id="MF_01047">
    <property type="entry name" value="UPF0227"/>
    <property type="match status" value="1"/>
</dbReference>
<dbReference type="InterPro" id="IPR029058">
    <property type="entry name" value="AB_hydrolase_fold"/>
</dbReference>
<dbReference type="InterPro" id="IPR022987">
    <property type="entry name" value="UPF0227"/>
</dbReference>
<dbReference type="InterPro" id="IPR008886">
    <property type="entry name" value="UPF0227/Esterase_YqiA"/>
</dbReference>
<dbReference type="NCBIfam" id="NF003431">
    <property type="entry name" value="PRK04940.1"/>
    <property type="match status" value="1"/>
</dbReference>
<dbReference type="PANTHER" id="PTHR35602">
    <property type="entry name" value="ESTERASE YQIA-RELATED"/>
    <property type="match status" value="1"/>
</dbReference>
<dbReference type="PANTHER" id="PTHR35602:SF2">
    <property type="entry name" value="UPF0227 PROTEIN YCFP"/>
    <property type="match status" value="1"/>
</dbReference>
<dbReference type="Pfam" id="PF05728">
    <property type="entry name" value="UPF0227"/>
    <property type="match status" value="1"/>
</dbReference>
<dbReference type="SUPFAM" id="SSF53474">
    <property type="entry name" value="alpha/beta-Hydrolases"/>
    <property type="match status" value="1"/>
</dbReference>
<accession>B7NAY6</accession>
<evidence type="ECO:0000255" key="1">
    <source>
        <dbReference type="HAMAP-Rule" id="MF_01047"/>
    </source>
</evidence>
<gene>
    <name evidence="1" type="primary">ycfP</name>
    <name type="ordered locus">ECUMN_1286</name>
</gene>
<feature type="chain" id="PRO_1000136189" description="UPF0227 protein YcfP">
    <location>
        <begin position="1"/>
        <end position="180"/>
    </location>
</feature>
<protein>
    <recommendedName>
        <fullName evidence="1">UPF0227 protein YcfP</fullName>
    </recommendedName>
</protein>
<proteinExistence type="inferred from homology"/>
<name>YCFP_ECOLU</name>